<organism>
    <name type="scientific">Burkholderia pseudomallei (strain 1710b)</name>
    <dbReference type="NCBI Taxonomy" id="320372"/>
    <lineage>
        <taxon>Bacteria</taxon>
        <taxon>Pseudomonadati</taxon>
        <taxon>Pseudomonadota</taxon>
        <taxon>Betaproteobacteria</taxon>
        <taxon>Burkholderiales</taxon>
        <taxon>Burkholderiaceae</taxon>
        <taxon>Burkholderia</taxon>
        <taxon>pseudomallei group</taxon>
    </lineage>
</organism>
<proteinExistence type="inferred from homology"/>
<comment type="function">
    <text evidence="1">The glycine cleavage system catalyzes the degradation of glycine. The P protein binds the alpha-amino group of glycine through its pyridoxal phosphate cofactor; CO(2) is released and the remaining methylamine moiety is then transferred to the lipoamide cofactor of the H protein.</text>
</comment>
<comment type="catalytic activity">
    <reaction evidence="1">
        <text>N(6)-[(R)-lipoyl]-L-lysyl-[glycine-cleavage complex H protein] + glycine + H(+) = N(6)-[(R)-S(8)-aminomethyldihydrolipoyl]-L-lysyl-[glycine-cleavage complex H protein] + CO2</text>
        <dbReference type="Rhea" id="RHEA:24304"/>
        <dbReference type="Rhea" id="RHEA-COMP:10494"/>
        <dbReference type="Rhea" id="RHEA-COMP:10495"/>
        <dbReference type="ChEBI" id="CHEBI:15378"/>
        <dbReference type="ChEBI" id="CHEBI:16526"/>
        <dbReference type="ChEBI" id="CHEBI:57305"/>
        <dbReference type="ChEBI" id="CHEBI:83099"/>
        <dbReference type="ChEBI" id="CHEBI:83143"/>
        <dbReference type="EC" id="1.4.4.2"/>
    </reaction>
</comment>
<comment type="cofactor">
    <cofactor evidence="1">
        <name>pyridoxal 5'-phosphate</name>
        <dbReference type="ChEBI" id="CHEBI:597326"/>
    </cofactor>
</comment>
<comment type="subunit">
    <text evidence="1">The glycine cleavage system is composed of four proteins: P, T, L and H.</text>
</comment>
<comment type="similarity">
    <text evidence="1">Belongs to the GcvP family.</text>
</comment>
<name>GCSP_BURP1</name>
<evidence type="ECO:0000255" key="1">
    <source>
        <dbReference type="HAMAP-Rule" id="MF_00711"/>
    </source>
</evidence>
<gene>
    <name evidence="1" type="primary">gcvP</name>
    <name type="ordered locus">BURPS1710b_0129</name>
</gene>
<dbReference type="EC" id="1.4.4.2" evidence="1"/>
<dbReference type="EMBL" id="CP000124">
    <property type="protein sequence ID" value="ABA48266.1"/>
    <property type="molecule type" value="Genomic_DNA"/>
</dbReference>
<dbReference type="RefSeq" id="WP_004195877.1">
    <property type="nucleotide sequence ID" value="NC_007434.1"/>
</dbReference>
<dbReference type="SMR" id="Q3JY08"/>
<dbReference type="EnsemblBacteria" id="ABA48266">
    <property type="protein sequence ID" value="ABA48266"/>
    <property type="gene ID" value="BURPS1710b_0129"/>
</dbReference>
<dbReference type="GeneID" id="92980672"/>
<dbReference type="KEGG" id="bpm:BURPS1710b_0129"/>
<dbReference type="HOGENOM" id="CLU_004620_2_1_4"/>
<dbReference type="Proteomes" id="UP000002700">
    <property type="component" value="Chromosome I"/>
</dbReference>
<dbReference type="GO" id="GO:0005829">
    <property type="term" value="C:cytosol"/>
    <property type="evidence" value="ECO:0007669"/>
    <property type="project" value="TreeGrafter"/>
</dbReference>
<dbReference type="GO" id="GO:0005960">
    <property type="term" value="C:glycine cleavage complex"/>
    <property type="evidence" value="ECO:0007669"/>
    <property type="project" value="TreeGrafter"/>
</dbReference>
<dbReference type="GO" id="GO:0016594">
    <property type="term" value="F:glycine binding"/>
    <property type="evidence" value="ECO:0007669"/>
    <property type="project" value="TreeGrafter"/>
</dbReference>
<dbReference type="GO" id="GO:0004375">
    <property type="term" value="F:glycine dehydrogenase (decarboxylating) activity"/>
    <property type="evidence" value="ECO:0007669"/>
    <property type="project" value="UniProtKB-EC"/>
</dbReference>
<dbReference type="GO" id="GO:0030170">
    <property type="term" value="F:pyridoxal phosphate binding"/>
    <property type="evidence" value="ECO:0007669"/>
    <property type="project" value="TreeGrafter"/>
</dbReference>
<dbReference type="GO" id="GO:0019464">
    <property type="term" value="P:glycine decarboxylation via glycine cleavage system"/>
    <property type="evidence" value="ECO:0007669"/>
    <property type="project" value="UniProtKB-UniRule"/>
</dbReference>
<dbReference type="CDD" id="cd00613">
    <property type="entry name" value="GDC-P"/>
    <property type="match status" value="2"/>
</dbReference>
<dbReference type="FunFam" id="3.40.640.10:FF:000005">
    <property type="entry name" value="Glycine dehydrogenase (decarboxylating), mitochondrial"/>
    <property type="match status" value="1"/>
</dbReference>
<dbReference type="FunFam" id="3.90.1150.10:FF:000007">
    <property type="entry name" value="Glycine dehydrogenase (decarboxylating), mitochondrial"/>
    <property type="match status" value="1"/>
</dbReference>
<dbReference type="FunFam" id="3.40.640.10:FF:000007">
    <property type="entry name" value="glycine dehydrogenase (Decarboxylating), mitochondrial"/>
    <property type="match status" value="1"/>
</dbReference>
<dbReference type="Gene3D" id="3.90.1150.10">
    <property type="entry name" value="Aspartate Aminotransferase, domain 1"/>
    <property type="match status" value="2"/>
</dbReference>
<dbReference type="Gene3D" id="3.40.640.10">
    <property type="entry name" value="Type I PLP-dependent aspartate aminotransferase-like (Major domain)"/>
    <property type="match status" value="2"/>
</dbReference>
<dbReference type="HAMAP" id="MF_00711">
    <property type="entry name" value="GcvP"/>
    <property type="match status" value="1"/>
</dbReference>
<dbReference type="InterPro" id="IPR003437">
    <property type="entry name" value="GcvP"/>
</dbReference>
<dbReference type="InterPro" id="IPR049316">
    <property type="entry name" value="GDC-P_C"/>
</dbReference>
<dbReference type="InterPro" id="IPR049315">
    <property type="entry name" value="GDC-P_N"/>
</dbReference>
<dbReference type="InterPro" id="IPR020581">
    <property type="entry name" value="GDC_P"/>
</dbReference>
<dbReference type="InterPro" id="IPR015424">
    <property type="entry name" value="PyrdxlP-dep_Trfase"/>
</dbReference>
<dbReference type="InterPro" id="IPR015421">
    <property type="entry name" value="PyrdxlP-dep_Trfase_major"/>
</dbReference>
<dbReference type="InterPro" id="IPR015422">
    <property type="entry name" value="PyrdxlP-dep_Trfase_small"/>
</dbReference>
<dbReference type="NCBIfam" id="TIGR00461">
    <property type="entry name" value="gcvP"/>
    <property type="match status" value="1"/>
</dbReference>
<dbReference type="NCBIfam" id="NF003346">
    <property type="entry name" value="PRK04366.1"/>
    <property type="match status" value="1"/>
</dbReference>
<dbReference type="PANTHER" id="PTHR11773:SF1">
    <property type="entry name" value="GLYCINE DEHYDROGENASE (DECARBOXYLATING), MITOCHONDRIAL"/>
    <property type="match status" value="1"/>
</dbReference>
<dbReference type="PANTHER" id="PTHR11773">
    <property type="entry name" value="GLYCINE DEHYDROGENASE, DECARBOXYLATING"/>
    <property type="match status" value="1"/>
</dbReference>
<dbReference type="Pfam" id="PF21478">
    <property type="entry name" value="GcvP2_C"/>
    <property type="match status" value="1"/>
</dbReference>
<dbReference type="Pfam" id="PF02347">
    <property type="entry name" value="GDC-P"/>
    <property type="match status" value="2"/>
</dbReference>
<dbReference type="SUPFAM" id="SSF53383">
    <property type="entry name" value="PLP-dependent transferases"/>
    <property type="match status" value="2"/>
</dbReference>
<feature type="chain" id="PRO_0000227099" description="Glycine dehydrogenase (decarboxylating)">
    <location>
        <begin position="1"/>
        <end position="975"/>
    </location>
</feature>
<feature type="modified residue" description="N6-(pyridoxal phosphate)lysine" evidence="1">
    <location>
        <position position="723"/>
    </location>
</feature>
<reference key="1">
    <citation type="journal article" date="2010" name="Genome Biol. Evol.">
        <title>Continuing evolution of Burkholderia mallei through genome reduction and large-scale rearrangements.</title>
        <authorList>
            <person name="Losada L."/>
            <person name="Ronning C.M."/>
            <person name="DeShazer D."/>
            <person name="Woods D."/>
            <person name="Fedorova N."/>
            <person name="Kim H.S."/>
            <person name="Shabalina S.A."/>
            <person name="Pearson T.R."/>
            <person name="Brinkac L."/>
            <person name="Tan P."/>
            <person name="Nandi T."/>
            <person name="Crabtree J."/>
            <person name="Badger J."/>
            <person name="Beckstrom-Sternberg S."/>
            <person name="Saqib M."/>
            <person name="Schutzer S.E."/>
            <person name="Keim P."/>
            <person name="Nierman W.C."/>
        </authorList>
    </citation>
    <scope>NUCLEOTIDE SEQUENCE [LARGE SCALE GENOMIC DNA]</scope>
    <source>
        <strain>1710b</strain>
    </source>
</reference>
<accession>Q3JY08</accession>
<sequence>MKLEHPDRLMNRTPLSLAALETHDAFAERHIGPDAASQQAMLDTLGFATRAALIDAVIPASIRRAETLPLGPFAQPKSEAEALAALRALADKNQVFRSYIGQGYYDTHTPAVILRNVLENPAWYTAYTPYQPEISQGRLEALLNFQQMVADLTGLEISNASLLDEATAAAEAMTLLQRVGKPQSNVFYVADDVLPQTLEVIKTRAKPIGIEVKSGPAADAAAANAFGVLLQYPGANGDVRDYRALADAIHAAGGHVVVAADILALTVLMPPGEWGADVAVGNTQRFGVPMGFGGPHAAYMAVRDEFKRQMPGRLVGVTVDAQGKPALRLALQTREQHIRREKATSNVCTAQALLAIMASMYAVYHGPRGLKTIALRVNRIAALLAAGIRHLGYATVNDTFFDTLTIDTGARTAQLHAFAQAKRINLRRAGDTRVGVSVDETTTRADLADLLTIFAQAAGATAPDIDALDAGLLPAPALPPSLERTSAYLTHHVFNRHHSETEMLRYLRSLSDKDLALDRSMIPLGSCTMKLNATSEMLPVTWPEFGRIHPFAPAEQTVGYREMIDQLEQMLVAATGYAAVSLQPNAGSQGEYAGLLIIHAYHESRGESHRDVCLIPASAHGTNPASAHMAGMKVVVVACDAQGNVDIADLKAKADAHSHDLAAIMITYPSTHGVFEQNVREICEIVHAHGGQVYVDGANMNAMVGLTAPGQFGGDVSHLNLHKTFCIPHGGGGPGVGPVAVGPHLAKFLPNQRSTGYARGEDGIGAVSAAPYGSASILPISWMYIAMMGAKNLTAATETAILNANYIAKRLAPHYPVLYSGPGGLVAHECILDLRPIKDSSGITVDDVAKRLMDYGFHAPTMSFPVPGTLMVEPTESESQEELDRFIAAMIAIRDEIRAVEEGRADREDNPLRHAPHTAAVVTANEWPHAYSREQAAFPVASLVANKYWPPVGRADNAYGDRNLFCSCVPVSDYA</sequence>
<keyword id="KW-0560">Oxidoreductase</keyword>
<keyword id="KW-0663">Pyridoxal phosphate</keyword>
<protein>
    <recommendedName>
        <fullName evidence="1">Glycine dehydrogenase (decarboxylating)</fullName>
        <ecNumber evidence="1">1.4.4.2</ecNumber>
    </recommendedName>
    <alternativeName>
        <fullName evidence="1">Glycine cleavage system P-protein</fullName>
    </alternativeName>
    <alternativeName>
        <fullName evidence="1">Glycine decarboxylase</fullName>
    </alternativeName>
    <alternativeName>
        <fullName evidence="1">Glycine dehydrogenase (aminomethyl-transferring)</fullName>
    </alternativeName>
</protein>